<organism>
    <name type="scientific">Chaetosphaeridium globosum</name>
    <name type="common">Charophycean green alga</name>
    <name type="synonym">Herposteiron globosum</name>
    <dbReference type="NCBI Taxonomy" id="96477"/>
    <lineage>
        <taxon>Eukaryota</taxon>
        <taxon>Viridiplantae</taxon>
        <taxon>Streptophyta</taxon>
        <taxon>Coleochaetophyceae</taxon>
        <taxon>Coleochaetales</taxon>
        <taxon>Chaetosphaeridiaceae</taxon>
        <taxon>Chaetosphaeridium</taxon>
    </lineage>
</organism>
<geneLocation type="chloroplast"/>
<gene>
    <name evidence="1" type="primary">matK</name>
</gene>
<protein>
    <recommendedName>
        <fullName evidence="1">Maturase K</fullName>
    </recommendedName>
    <alternativeName>
        <fullName evidence="1">Intron maturase</fullName>
    </alternativeName>
</protein>
<reference key="1">
    <citation type="journal article" date="2002" name="Proc. Natl. Acad. Sci. U.S.A.">
        <title>The chloroplast and mitochondrial genome sequences of the charophyte Chaetosphaeridium globosum: insights into the timing of the events that restructured organelle DNAs within the green algal lineage that led to land plants.</title>
        <authorList>
            <person name="Turmel M."/>
            <person name="Otis C."/>
            <person name="Lemieux C."/>
        </authorList>
    </citation>
    <scope>NUCLEOTIDE SEQUENCE [LARGE SCALE GENOMIC DNA]</scope>
    <source>
        <strain>M1311</strain>
    </source>
</reference>
<feature type="chain" id="PRO_0000143323" description="Maturase K">
    <location>
        <begin position="1"/>
        <end position="508"/>
    </location>
</feature>
<dbReference type="EMBL" id="AF494278">
    <property type="protein sequence ID" value="AAM96588.1"/>
    <property type="molecule type" value="Genomic_DNA"/>
</dbReference>
<dbReference type="RefSeq" id="NP_683782.1">
    <property type="nucleotide sequence ID" value="NC_004115.1"/>
</dbReference>
<dbReference type="GeneID" id="860770"/>
<dbReference type="GO" id="GO:0009507">
    <property type="term" value="C:chloroplast"/>
    <property type="evidence" value="ECO:0007669"/>
    <property type="project" value="UniProtKB-SubCell"/>
</dbReference>
<dbReference type="GO" id="GO:0003723">
    <property type="term" value="F:RNA binding"/>
    <property type="evidence" value="ECO:0007669"/>
    <property type="project" value="UniProtKB-KW"/>
</dbReference>
<dbReference type="GO" id="GO:0006397">
    <property type="term" value="P:mRNA processing"/>
    <property type="evidence" value="ECO:0007669"/>
    <property type="project" value="UniProtKB-KW"/>
</dbReference>
<dbReference type="GO" id="GO:0008380">
    <property type="term" value="P:RNA splicing"/>
    <property type="evidence" value="ECO:0007669"/>
    <property type="project" value="UniProtKB-UniRule"/>
</dbReference>
<dbReference type="GO" id="GO:0008033">
    <property type="term" value="P:tRNA processing"/>
    <property type="evidence" value="ECO:0007669"/>
    <property type="project" value="UniProtKB-KW"/>
</dbReference>
<dbReference type="HAMAP" id="MF_01390">
    <property type="entry name" value="MatK"/>
    <property type="match status" value="1"/>
</dbReference>
<dbReference type="InterPro" id="IPR024937">
    <property type="entry name" value="Domain_X"/>
</dbReference>
<dbReference type="InterPro" id="IPR002866">
    <property type="entry name" value="Maturase_MatK"/>
</dbReference>
<dbReference type="InterPro" id="IPR024942">
    <property type="entry name" value="Maturase_MatK_N"/>
</dbReference>
<dbReference type="PANTHER" id="PTHR34811">
    <property type="entry name" value="MATURASE K"/>
    <property type="match status" value="1"/>
</dbReference>
<dbReference type="PANTHER" id="PTHR34811:SF1">
    <property type="entry name" value="MATURASE K"/>
    <property type="match status" value="1"/>
</dbReference>
<dbReference type="Pfam" id="PF01348">
    <property type="entry name" value="Intron_maturas2"/>
    <property type="match status" value="1"/>
</dbReference>
<dbReference type="Pfam" id="PF01824">
    <property type="entry name" value="MatK_N"/>
    <property type="match status" value="1"/>
</dbReference>
<accession>Q8MA04</accession>
<proteinExistence type="inferred from homology"/>
<evidence type="ECO:0000255" key="1">
    <source>
        <dbReference type="HAMAP-Rule" id="MF_01390"/>
    </source>
</evidence>
<name>MATK_CHAGL</name>
<sequence>MERNKNYYINVFHKQAENDLNFNKFYFYFFQETFYCLAYKQVSYKFLQNNVFIKKKKKFSFFNLKRTIRSMRNQNYKESFFFIEQKKLSKKLLFSKLFYELLQEILKCILEISFKIKKNPKISSYSTMSSIHGPFISFEENLIYFPVAIQSYLPNRVHPELIVRILRSYNLDVNLFHFLRNIVHNGLYILSPPFLLNFGFRSLSTIFFNIYAYEIDLGFLSFLKLQKDLPQKYQTELDIFSSSRKITFYFKNYSDFNNLKKIDQIERKYNNIIDYGPIYYLRYSNILLISLNLIKKNANFFQLIYIRFFHLRFHFLFAKNLVKKISFNQDQIFFLGFLVFFFYTKIQIRIKLKKCLVNFIKLEKKICINVPIKLLIIFLSKNGFCDISGNSKSKLSWSVLQDIEIIEKFRRLWLTISGYYSGSSNKYCLKIVLYILRYSCAKTLACKHKMSLKKIWKKYTLNLSVTLKFQTGKKKFLSFSHFKDFHKDEKSWQLNLKETNSIVYTFWN</sequence>
<comment type="function">
    <text evidence="1">Usually encoded in the trnK tRNA gene intron. Probably assists in splicing its own and other chloroplast group II introns.</text>
</comment>
<comment type="subcellular location">
    <subcellularLocation>
        <location>Plastid</location>
        <location>Chloroplast</location>
    </subcellularLocation>
</comment>
<comment type="similarity">
    <text evidence="1">Belongs to the intron maturase 2 family. MatK subfamily.</text>
</comment>
<keyword id="KW-0150">Chloroplast</keyword>
<keyword id="KW-0507">mRNA processing</keyword>
<keyword id="KW-0934">Plastid</keyword>
<keyword id="KW-0694">RNA-binding</keyword>
<keyword id="KW-0819">tRNA processing</keyword>